<gene>
    <name evidence="1" type="primary">ffh</name>
    <name type="ordered locus">HP_1152</name>
</gene>
<feature type="chain" id="PRO_0000101157" description="Signal recognition particle protein">
    <location>
        <begin position="1"/>
        <end position="448"/>
    </location>
</feature>
<feature type="binding site" evidence="1">
    <location>
        <begin position="101"/>
        <end position="108"/>
    </location>
    <ligand>
        <name>GTP</name>
        <dbReference type="ChEBI" id="CHEBI:37565"/>
    </ligand>
</feature>
<feature type="binding site" evidence="1">
    <location>
        <begin position="182"/>
        <end position="186"/>
    </location>
    <ligand>
        <name>GTP</name>
        <dbReference type="ChEBI" id="CHEBI:37565"/>
    </ligand>
</feature>
<feature type="binding site" evidence="1">
    <location>
        <begin position="240"/>
        <end position="243"/>
    </location>
    <ligand>
        <name>GTP</name>
        <dbReference type="ChEBI" id="CHEBI:37565"/>
    </ligand>
</feature>
<protein>
    <recommendedName>
        <fullName evidence="1">Signal recognition particle protein</fullName>
        <ecNumber evidence="1">3.6.5.4</ecNumber>
    </recommendedName>
    <alternativeName>
        <fullName evidence="1">Fifty-four homolog</fullName>
    </alternativeName>
</protein>
<proteinExistence type="inferred from homology"/>
<accession>P56005</accession>
<keyword id="KW-0963">Cytoplasm</keyword>
<keyword id="KW-0342">GTP-binding</keyword>
<keyword id="KW-0378">Hydrolase</keyword>
<keyword id="KW-0547">Nucleotide-binding</keyword>
<keyword id="KW-1185">Reference proteome</keyword>
<keyword id="KW-0687">Ribonucleoprotein</keyword>
<keyword id="KW-0694">RNA-binding</keyword>
<keyword id="KW-0733">Signal recognition particle</keyword>
<name>SRP54_HELPY</name>
<dbReference type="EC" id="3.6.5.4" evidence="1"/>
<dbReference type="EMBL" id="AE000511">
    <property type="protein sequence ID" value="AAD08194.1"/>
    <property type="molecule type" value="Genomic_DNA"/>
</dbReference>
<dbReference type="PIR" id="H64663">
    <property type="entry name" value="H64663"/>
</dbReference>
<dbReference type="RefSeq" id="NP_207943.1">
    <property type="nucleotide sequence ID" value="NC_000915.1"/>
</dbReference>
<dbReference type="RefSeq" id="WP_000484750.1">
    <property type="nucleotide sequence ID" value="NC_018939.1"/>
</dbReference>
<dbReference type="SMR" id="P56005"/>
<dbReference type="FunCoup" id="P56005">
    <property type="interactions" value="354"/>
</dbReference>
<dbReference type="STRING" id="85962.HP_1152"/>
<dbReference type="PaxDb" id="85962-C694_05950"/>
<dbReference type="EnsemblBacteria" id="AAD08194">
    <property type="protein sequence ID" value="AAD08194"/>
    <property type="gene ID" value="HP_1152"/>
</dbReference>
<dbReference type="KEGG" id="heo:C694_05950"/>
<dbReference type="KEGG" id="hpy:HP_1152"/>
<dbReference type="PATRIC" id="fig|85962.47.peg.1236"/>
<dbReference type="eggNOG" id="COG0541">
    <property type="taxonomic scope" value="Bacteria"/>
</dbReference>
<dbReference type="InParanoid" id="P56005"/>
<dbReference type="OrthoDB" id="9804720at2"/>
<dbReference type="PhylomeDB" id="P56005"/>
<dbReference type="Proteomes" id="UP000000429">
    <property type="component" value="Chromosome"/>
</dbReference>
<dbReference type="GO" id="GO:0048500">
    <property type="term" value="C:signal recognition particle"/>
    <property type="evidence" value="ECO:0007669"/>
    <property type="project" value="UniProtKB-UniRule"/>
</dbReference>
<dbReference type="GO" id="GO:0008312">
    <property type="term" value="F:7S RNA binding"/>
    <property type="evidence" value="ECO:0007669"/>
    <property type="project" value="InterPro"/>
</dbReference>
<dbReference type="GO" id="GO:0016887">
    <property type="term" value="F:ATP hydrolysis activity"/>
    <property type="evidence" value="ECO:0007669"/>
    <property type="project" value="InterPro"/>
</dbReference>
<dbReference type="GO" id="GO:0005525">
    <property type="term" value="F:GTP binding"/>
    <property type="evidence" value="ECO:0007669"/>
    <property type="project" value="UniProtKB-UniRule"/>
</dbReference>
<dbReference type="GO" id="GO:0003924">
    <property type="term" value="F:GTPase activity"/>
    <property type="evidence" value="ECO:0007669"/>
    <property type="project" value="UniProtKB-UniRule"/>
</dbReference>
<dbReference type="GO" id="GO:0006614">
    <property type="term" value="P:SRP-dependent cotranslational protein targeting to membrane"/>
    <property type="evidence" value="ECO:0007669"/>
    <property type="project" value="InterPro"/>
</dbReference>
<dbReference type="CDD" id="cd18539">
    <property type="entry name" value="SRP_G"/>
    <property type="match status" value="1"/>
</dbReference>
<dbReference type="Gene3D" id="3.40.50.300">
    <property type="entry name" value="P-loop containing nucleotide triphosphate hydrolases"/>
    <property type="match status" value="1"/>
</dbReference>
<dbReference type="Gene3D" id="1.20.120.140">
    <property type="entry name" value="Signal recognition particle SRP54, nucleotide-binding domain"/>
    <property type="match status" value="1"/>
</dbReference>
<dbReference type="Gene3D" id="1.10.260.30">
    <property type="entry name" value="Signal recognition particle, SRP54 subunit, M-domain"/>
    <property type="match status" value="1"/>
</dbReference>
<dbReference type="HAMAP" id="MF_00306">
    <property type="entry name" value="SRP54"/>
    <property type="match status" value="1"/>
</dbReference>
<dbReference type="InterPro" id="IPR003593">
    <property type="entry name" value="AAA+_ATPase"/>
</dbReference>
<dbReference type="InterPro" id="IPR027417">
    <property type="entry name" value="P-loop_NTPase"/>
</dbReference>
<dbReference type="InterPro" id="IPR036891">
    <property type="entry name" value="Signal_recog_part_SRP54_M_sf"/>
</dbReference>
<dbReference type="InterPro" id="IPR013822">
    <property type="entry name" value="Signal_recog_particl_SRP54_hlx"/>
</dbReference>
<dbReference type="InterPro" id="IPR004125">
    <property type="entry name" value="Signal_recog_particle_SRP54_M"/>
</dbReference>
<dbReference type="InterPro" id="IPR004780">
    <property type="entry name" value="SRP"/>
</dbReference>
<dbReference type="InterPro" id="IPR036225">
    <property type="entry name" value="SRP/SRP_N"/>
</dbReference>
<dbReference type="InterPro" id="IPR022941">
    <property type="entry name" value="SRP54"/>
</dbReference>
<dbReference type="InterPro" id="IPR000897">
    <property type="entry name" value="SRP54_GTPase_dom"/>
</dbReference>
<dbReference type="InterPro" id="IPR042101">
    <property type="entry name" value="SRP54_N_sf"/>
</dbReference>
<dbReference type="NCBIfam" id="TIGR00959">
    <property type="entry name" value="ffh"/>
    <property type="match status" value="1"/>
</dbReference>
<dbReference type="PANTHER" id="PTHR11564">
    <property type="entry name" value="SIGNAL RECOGNITION PARTICLE 54K PROTEIN SRP54"/>
    <property type="match status" value="1"/>
</dbReference>
<dbReference type="PANTHER" id="PTHR11564:SF5">
    <property type="entry name" value="SIGNAL RECOGNITION PARTICLE SUBUNIT SRP54"/>
    <property type="match status" value="1"/>
</dbReference>
<dbReference type="Pfam" id="PF00448">
    <property type="entry name" value="SRP54"/>
    <property type="match status" value="1"/>
</dbReference>
<dbReference type="Pfam" id="PF02881">
    <property type="entry name" value="SRP54_N"/>
    <property type="match status" value="1"/>
</dbReference>
<dbReference type="Pfam" id="PF02978">
    <property type="entry name" value="SRP_SPB"/>
    <property type="match status" value="1"/>
</dbReference>
<dbReference type="SMART" id="SM00382">
    <property type="entry name" value="AAA"/>
    <property type="match status" value="1"/>
</dbReference>
<dbReference type="SMART" id="SM00962">
    <property type="entry name" value="SRP54"/>
    <property type="match status" value="1"/>
</dbReference>
<dbReference type="SMART" id="SM00963">
    <property type="entry name" value="SRP54_N"/>
    <property type="match status" value="1"/>
</dbReference>
<dbReference type="SUPFAM" id="SSF47364">
    <property type="entry name" value="Domain of the SRP/SRP receptor G-proteins"/>
    <property type="match status" value="1"/>
</dbReference>
<dbReference type="SUPFAM" id="SSF52540">
    <property type="entry name" value="P-loop containing nucleoside triphosphate hydrolases"/>
    <property type="match status" value="1"/>
</dbReference>
<dbReference type="SUPFAM" id="SSF47446">
    <property type="entry name" value="Signal peptide-binding domain"/>
    <property type="match status" value="1"/>
</dbReference>
<dbReference type="PROSITE" id="PS00300">
    <property type="entry name" value="SRP54"/>
    <property type="match status" value="1"/>
</dbReference>
<evidence type="ECO:0000255" key="1">
    <source>
        <dbReference type="HAMAP-Rule" id="MF_00306"/>
    </source>
</evidence>
<sequence length="448" mass="49175">MFQALSDGFKNALNKIRFQDDEKALDRALDELKKTLLKNDVHHKVARELLKKVESQTKLNGIGKQQFLDALEKSLLEILSAKGSSGFTFAQTPPTVVLMAGLQGSGKTTTTAKLAHYLKTKNKKVLLCACDLQRLAAVEQLKVLGEQVGVEVFYEENKSVKEIASNALKRAKEAQFDVLLVDSAGRLAIDKELMQELKEVKEILNPHEVLYVADALSGQDGVKSANTFNEEIGVSGVVLSKFDSDSKGGIALGITYQLGLPLRFIGSGEKIPDLDVFVPERIVGRLMGAGDIVSLAEKTASVLNPNEAKDLSKKLKKGQFTFNDFLNQIEKVKKLGSMSSLISMIPGLGNMASALKDTDLESSLEVKKIKAMVNSMTKKEQENPEILNGSRRKRIALGSGLEVSEINRIIKRFDQASKMAKRLTNKKGISDLMNLMSQAKNQTPPKMR</sequence>
<organism>
    <name type="scientific">Helicobacter pylori (strain ATCC 700392 / 26695)</name>
    <name type="common">Campylobacter pylori</name>
    <dbReference type="NCBI Taxonomy" id="85962"/>
    <lineage>
        <taxon>Bacteria</taxon>
        <taxon>Pseudomonadati</taxon>
        <taxon>Campylobacterota</taxon>
        <taxon>Epsilonproteobacteria</taxon>
        <taxon>Campylobacterales</taxon>
        <taxon>Helicobacteraceae</taxon>
        <taxon>Helicobacter</taxon>
    </lineage>
</organism>
<reference key="1">
    <citation type="journal article" date="1997" name="Nature">
        <title>The complete genome sequence of the gastric pathogen Helicobacter pylori.</title>
        <authorList>
            <person name="Tomb J.-F."/>
            <person name="White O."/>
            <person name="Kerlavage A.R."/>
            <person name="Clayton R.A."/>
            <person name="Sutton G.G."/>
            <person name="Fleischmann R.D."/>
            <person name="Ketchum K.A."/>
            <person name="Klenk H.-P."/>
            <person name="Gill S.R."/>
            <person name="Dougherty B.A."/>
            <person name="Nelson K.E."/>
            <person name="Quackenbush J."/>
            <person name="Zhou L."/>
            <person name="Kirkness E.F."/>
            <person name="Peterson S.N."/>
            <person name="Loftus B.J."/>
            <person name="Richardson D.L."/>
            <person name="Dodson R.J."/>
            <person name="Khalak H.G."/>
            <person name="Glodek A."/>
            <person name="McKenney K."/>
            <person name="FitzGerald L.M."/>
            <person name="Lee N."/>
            <person name="Adams M.D."/>
            <person name="Hickey E.K."/>
            <person name="Berg D.E."/>
            <person name="Gocayne J.D."/>
            <person name="Utterback T.R."/>
            <person name="Peterson J.D."/>
            <person name="Kelley J.M."/>
            <person name="Cotton M.D."/>
            <person name="Weidman J.F."/>
            <person name="Fujii C."/>
            <person name="Bowman C."/>
            <person name="Watthey L."/>
            <person name="Wallin E."/>
            <person name="Hayes W.S."/>
            <person name="Borodovsky M."/>
            <person name="Karp P.D."/>
            <person name="Smith H.O."/>
            <person name="Fraser C.M."/>
            <person name="Venter J.C."/>
        </authorList>
    </citation>
    <scope>NUCLEOTIDE SEQUENCE [LARGE SCALE GENOMIC DNA]</scope>
    <source>
        <strain>ATCC 700392 / 26695</strain>
    </source>
</reference>
<comment type="function">
    <text evidence="1">Involved in targeting and insertion of nascent membrane proteins into the cytoplasmic membrane. Binds to the hydrophobic signal sequence of the ribosome-nascent chain (RNC) as it emerges from the ribosomes. The SRP-RNC complex is then targeted to the cytoplasmic membrane where it interacts with the SRP receptor FtsY. Interaction with FtsY leads to the transfer of the RNC complex to the Sec translocase for insertion into the membrane, the hydrolysis of GTP by both Ffh and FtsY, and the dissociation of the SRP-FtsY complex into the individual components.</text>
</comment>
<comment type="catalytic activity">
    <reaction evidence="1">
        <text>GTP + H2O = GDP + phosphate + H(+)</text>
        <dbReference type="Rhea" id="RHEA:19669"/>
        <dbReference type="ChEBI" id="CHEBI:15377"/>
        <dbReference type="ChEBI" id="CHEBI:15378"/>
        <dbReference type="ChEBI" id="CHEBI:37565"/>
        <dbReference type="ChEBI" id="CHEBI:43474"/>
        <dbReference type="ChEBI" id="CHEBI:58189"/>
        <dbReference type="EC" id="3.6.5.4"/>
    </reaction>
</comment>
<comment type="subunit">
    <text evidence="1">Part of the signal recognition particle protein translocation system, which is composed of SRP and FtsY. SRP is a ribonucleoprotein composed of Ffh and a 4.5S RNA molecule.</text>
</comment>
<comment type="subcellular location">
    <subcellularLocation>
        <location evidence="1">Cytoplasm</location>
    </subcellularLocation>
    <text evidence="1">The SRP-RNC complex is targeted to the cytoplasmic membrane.</text>
</comment>
<comment type="domain">
    <text evidence="1">Composed of three domains: the N-terminal N domain, which is responsible for interactions with the ribosome, the central G domain, which binds GTP, and the C-terminal M domain, which binds the RNA and the signal sequence of the RNC.</text>
</comment>
<comment type="similarity">
    <text evidence="1">Belongs to the GTP-binding SRP family. SRP54 subfamily.</text>
</comment>